<reference key="1">
    <citation type="journal article" date="2012" name="Stand. Genomic Sci.">
        <title>Complete genome sequence of Polynucleobacter necessarius subsp. asymbioticus type strain (QLW-P1DMWA-1(T)).</title>
        <authorList>
            <person name="Meincke L."/>
            <person name="Copeland A."/>
            <person name="Lapidus A."/>
            <person name="Lucas S."/>
            <person name="Berry K.W."/>
            <person name="Del Rio T.G."/>
            <person name="Hammon N."/>
            <person name="Dalin E."/>
            <person name="Tice H."/>
            <person name="Pitluck S."/>
            <person name="Richardson P."/>
            <person name="Bruce D."/>
            <person name="Goodwin L."/>
            <person name="Han C."/>
            <person name="Tapia R."/>
            <person name="Detter J.C."/>
            <person name="Schmutz J."/>
            <person name="Brettin T."/>
            <person name="Larimer F."/>
            <person name="Land M."/>
            <person name="Hauser L."/>
            <person name="Kyrpides N.C."/>
            <person name="Ivanova N."/>
            <person name="Goker M."/>
            <person name="Woyke T."/>
            <person name="Wu Q.L."/>
            <person name="Pockl M."/>
            <person name="Hahn M.W."/>
            <person name="Klenk H.P."/>
        </authorList>
    </citation>
    <scope>NUCLEOTIDE SEQUENCE [LARGE SCALE GENOMIC DNA]</scope>
    <source>
        <strain>DSM 18221 / CIP 109841 / QLW-P1DMWA-1</strain>
    </source>
</reference>
<comment type="function">
    <text evidence="1">Catalyzes the phosphorylation of the position 2 hydroxy group of 4-diphosphocytidyl-2C-methyl-D-erythritol.</text>
</comment>
<comment type="catalytic activity">
    <reaction evidence="1">
        <text>4-CDP-2-C-methyl-D-erythritol + ATP = 4-CDP-2-C-methyl-D-erythritol 2-phosphate + ADP + H(+)</text>
        <dbReference type="Rhea" id="RHEA:18437"/>
        <dbReference type="ChEBI" id="CHEBI:15378"/>
        <dbReference type="ChEBI" id="CHEBI:30616"/>
        <dbReference type="ChEBI" id="CHEBI:57823"/>
        <dbReference type="ChEBI" id="CHEBI:57919"/>
        <dbReference type="ChEBI" id="CHEBI:456216"/>
        <dbReference type="EC" id="2.7.1.148"/>
    </reaction>
</comment>
<comment type="pathway">
    <text evidence="1">Isoprenoid biosynthesis; isopentenyl diphosphate biosynthesis via DXP pathway; isopentenyl diphosphate from 1-deoxy-D-xylulose 5-phosphate: step 3/6.</text>
</comment>
<comment type="similarity">
    <text evidence="1">Belongs to the GHMP kinase family. IspE subfamily.</text>
</comment>
<proteinExistence type="inferred from homology"/>
<dbReference type="EC" id="2.7.1.148" evidence="1"/>
<dbReference type="EMBL" id="CP000655">
    <property type="protein sequence ID" value="ABP35131.1"/>
    <property type="molecule type" value="Genomic_DNA"/>
</dbReference>
<dbReference type="RefSeq" id="WP_011903754.1">
    <property type="nucleotide sequence ID" value="NC_009379.1"/>
</dbReference>
<dbReference type="SMR" id="A4T067"/>
<dbReference type="GeneID" id="31482309"/>
<dbReference type="KEGG" id="pnu:Pnuc_1919"/>
<dbReference type="eggNOG" id="COG1947">
    <property type="taxonomic scope" value="Bacteria"/>
</dbReference>
<dbReference type="HOGENOM" id="CLU_053057_3_0_4"/>
<dbReference type="UniPathway" id="UPA00056">
    <property type="reaction ID" value="UER00094"/>
</dbReference>
<dbReference type="Proteomes" id="UP000000231">
    <property type="component" value="Chromosome"/>
</dbReference>
<dbReference type="GO" id="GO:0050515">
    <property type="term" value="F:4-(cytidine 5'-diphospho)-2-C-methyl-D-erythritol kinase activity"/>
    <property type="evidence" value="ECO:0007669"/>
    <property type="project" value="UniProtKB-UniRule"/>
</dbReference>
<dbReference type="GO" id="GO:0005524">
    <property type="term" value="F:ATP binding"/>
    <property type="evidence" value="ECO:0007669"/>
    <property type="project" value="UniProtKB-UniRule"/>
</dbReference>
<dbReference type="GO" id="GO:0019288">
    <property type="term" value="P:isopentenyl diphosphate biosynthetic process, methylerythritol 4-phosphate pathway"/>
    <property type="evidence" value="ECO:0007669"/>
    <property type="project" value="UniProtKB-UniRule"/>
</dbReference>
<dbReference type="GO" id="GO:0016114">
    <property type="term" value="P:terpenoid biosynthetic process"/>
    <property type="evidence" value="ECO:0007669"/>
    <property type="project" value="InterPro"/>
</dbReference>
<dbReference type="Gene3D" id="3.30.230.10">
    <property type="match status" value="1"/>
</dbReference>
<dbReference type="Gene3D" id="3.30.70.890">
    <property type="entry name" value="GHMP kinase, C-terminal domain"/>
    <property type="match status" value="1"/>
</dbReference>
<dbReference type="HAMAP" id="MF_00061">
    <property type="entry name" value="IspE"/>
    <property type="match status" value="1"/>
</dbReference>
<dbReference type="InterPro" id="IPR013750">
    <property type="entry name" value="GHMP_kinase_C_dom"/>
</dbReference>
<dbReference type="InterPro" id="IPR036554">
    <property type="entry name" value="GHMP_kinase_C_sf"/>
</dbReference>
<dbReference type="InterPro" id="IPR006204">
    <property type="entry name" value="GHMP_kinase_N_dom"/>
</dbReference>
<dbReference type="InterPro" id="IPR004424">
    <property type="entry name" value="IspE"/>
</dbReference>
<dbReference type="InterPro" id="IPR020568">
    <property type="entry name" value="Ribosomal_Su5_D2-typ_SF"/>
</dbReference>
<dbReference type="InterPro" id="IPR014721">
    <property type="entry name" value="Ribsml_uS5_D2-typ_fold_subgr"/>
</dbReference>
<dbReference type="NCBIfam" id="TIGR00154">
    <property type="entry name" value="ispE"/>
    <property type="match status" value="1"/>
</dbReference>
<dbReference type="PANTHER" id="PTHR43527">
    <property type="entry name" value="4-DIPHOSPHOCYTIDYL-2-C-METHYL-D-ERYTHRITOL KINASE, CHLOROPLASTIC"/>
    <property type="match status" value="1"/>
</dbReference>
<dbReference type="PANTHER" id="PTHR43527:SF2">
    <property type="entry name" value="4-DIPHOSPHOCYTIDYL-2-C-METHYL-D-ERYTHRITOL KINASE, CHLOROPLASTIC"/>
    <property type="match status" value="1"/>
</dbReference>
<dbReference type="Pfam" id="PF08544">
    <property type="entry name" value="GHMP_kinases_C"/>
    <property type="match status" value="1"/>
</dbReference>
<dbReference type="Pfam" id="PF00288">
    <property type="entry name" value="GHMP_kinases_N"/>
    <property type="match status" value="1"/>
</dbReference>
<dbReference type="PIRSF" id="PIRSF010376">
    <property type="entry name" value="IspE"/>
    <property type="match status" value="1"/>
</dbReference>
<dbReference type="SUPFAM" id="SSF55060">
    <property type="entry name" value="GHMP Kinase, C-terminal domain"/>
    <property type="match status" value="1"/>
</dbReference>
<dbReference type="SUPFAM" id="SSF54211">
    <property type="entry name" value="Ribosomal protein S5 domain 2-like"/>
    <property type="match status" value="1"/>
</dbReference>
<gene>
    <name evidence="1" type="primary">ispE</name>
    <name type="ordered locus">Pnuc_1919</name>
</gene>
<evidence type="ECO:0000255" key="1">
    <source>
        <dbReference type="HAMAP-Rule" id="MF_00061"/>
    </source>
</evidence>
<feature type="chain" id="PRO_0000335740" description="4-diphosphocytidyl-2-C-methyl-D-erythritol kinase">
    <location>
        <begin position="1"/>
        <end position="294"/>
    </location>
</feature>
<feature type="active site" evidence="1">
    <location>
        <position position="16"/>
    </location>
</feature>
<feature type="active site" evidence="1">
    <location>
        <position position="141"/>
    </location>
</feature>
<feature type="binding site" evidence="1">
    <location>
        <begin position="99"/>
        <end position="109"/>
    </location>
    <ligand>
        <name>ATP</name>
        <dbReference type="ChEBI" id="CHEBI:30616"/>
    </ligand>
</feature>
<protein>
    <recommendedName>
        <fullName evidence="1">4-diphosphocytidyl-2-C-methyl-D-erythritol kinase</fullName>
        <shortName evidence="1">CMK</shortName>
        <ecNumber evidence="1">2.7.1.148</ecNumber>
    </recommendedName>
    <alternativeName>
        <fullName evidence="1">4-(cytidine-5'-diphospho)-2-C-methyl-D-erythritol kinase</fullName>
    </alternativeName>
</protein>
<name>ISPE_POLAQ</name>
<accession>A4T067</accession>
<keyword id="KW-0067">ATP-binding</keyword>
<keyword id="KW-0414">Isoprene biosynthesis</keyword>
<keyword id="KW-0418">Kinase</keyword>
<keyword id="KW-0547">Nucleotide-binding</keyword>
<keyword id="KW-1185">Reference proteome</keyword>
<keyword id="KW-0808">Transferase</keyword>
<organism>
    <name type="scientific">Polynucleobacter asymbioticus (strain DSM 18221 / CIP 109841 / QLW-P1DMWA-1)</name>
    <name type="common">Polynucleobacter necessarius subsp. asymbioticus</name>
    <dbReference type="NCBI Taxonomy" id="312153"/>
    <lineage>
        <taxon>Bacteria</taxon>
        <taxon>Pseudomonadati</taxon>
        <taxon>Pseudomonadota</taxon>
        <taxon>Betaproteobacteria</taxon>
        <taxon>Burkholderiales</taxon>
        <taxon>Burkholderiaceae</taxon>
        <taxon>Polynucleobacter</taxon>
    </lineage>
</organism>
<sequence>MSKQPQQSLTLRSPAKLNLFLHIVGQRPDGYHLLQSVFQLIDWTDTVHLKRIPENEVRRINPIPDVSPEQDLVVRAAKLVKDFCKIDLGVEIDLKKEIPMGAGLGGGSSDAASTLIGLNTLWNLDLDKKTLSNLGLKLGADVPFFIFGQNAFVEGIGEQIQEISLENRDFLVIFPNRAIPTVSIFHDPELTRDHAPITIDGFLASPLSNQINDCQAVAMRICPEVKQALDWVSQALPGSAPRMSGSGSSVFAVLDPKTDSVKLENLLQSLPKGWIGRVVRGLNKNPAYNLISSD</sequence>